<dbReference type="EC" id="6.2.1.5" evidence="1"/>
<dbReference type="EMBL" id="CP001628">
    <property type="protein sequence ID" value="ACS29968.1"/>
    <property type="molecule type" value="Genomic_DNA"/>
</dbReference>
<dbReference type="RefSeq" id="WP_010079404.1">
    <property type="nucleotide sequence ID" value="NC_012803.1"/>
</dbReference>
<dbReference type="SMR" id="C5C916"/>
<dbReference type="STRING" id="465515.Mlut_04270"/>
<dbReference type="EnsemblBacteria" id="ACS29968">
    <property type="protein sequence ID" value="ACS29968"/>
    <property type="gene ID" value="Mlut_04270"/>
</dbReference>
<dbReference type="GeneID" id="93344605"/>
<dbReference type="KEGG" id="mlu:Mlut_04270"/>
<dbReference type="PATRIC" id="fig|465515.4.peg.398"/>
<dbReference type="eggNOG" id="COG0045">
    <property type="taxonomic scope" value="Bacteria"/>
</dbReference>
<dbReference type="HOGENOM" id="CLU_037430_0_2_11"/>
<dbReference type="UniPathway" id="UPA00223">
    <property type="reaction ID" value="UER00999"/>
</dbReference>
<dbReference type="Proteomes" id="UP000000738">
    <property type="component" value="Chromosome"/>
</dbReference>
<dbReference type="GO" id="GO:0005829">
    <property type="term" value="C:cytosol"/>
    <property type="evidence" value="ECO:0007669"/>
    <property type="project" value="TreeGrafter"/>
</dbReference>
<dbReference type="GO" id="GO:0042709">
    <property type="term" value="C:succinate-CoA ligase complex"/>
    <property type="evidence" value="ECO:0007669"/>
    <property type="project" value="TreeGrafter"/>
</dbReference>
<dbReference type="GO" id="GO:0005524">
    <property type="term" value="F:ATP binding"/>
    <property type="evidence" value="ECO:0007669"/>
    <property type="project" value="UniProtKB-UniRule"/>
</dbReference>
<dbReference type="GO" id="GO:0000287">
    <property type="term" value="F:magnesium ion binding"/>
    <property type="evidence" value="ECO:0007669"/>
    <property type="project" value="UniProtKB-UniRule"/>
</dbReference>
<dbReference type="GO" id="GO:0004775">
    <property type="term" value="F:succinate-CoA ligase (ADP-forming) activity"/>
    <property type="evidence" value="ECO:0007669"/>
    <property type="project" value="UniProtKB-UniRule"/>
</dbReference>
<dbReference type="GO" id="GO:0004776">
    <property type="term" value="F:succinate-CoA ligase (GDP-forming) activity"/>
    <property type="evidence" value="ECO:0007669"/>
    <property type="project" value="RHEA"/>
</dbReference>
<dbReference type="GO" id="GO:0006104">
    <property type="term" value="P:succinyl-CoA metabolic process"/>
    <property type="evidence" value="ECO:0007669"/>
    <property type="project" value="TreeGrafter"/>
</dbReference>
<dbReference type="GO" id="GO:0006099">
    <property type="term" value="P:tricarboxylic acid cycle"/>
    <property type="evidence" value="ECO:0007669"/>
    <property type="project" value="UniProtKB-UniRule"/>
</dbReference>
<dbReference type="FunFam" id="3.30.1490.20:FF:000014">
    <property type="entry name" value="Succinate--CoA ligase [ADP-forming] subunit beta"/>
    <property type="match status" value="1"/>
</dbReference>
<dbReference type="FunFam" id="3.30.470.20:FF:000002">
    <property type="entry name" value="Succinate--CoA ligase [ADP-forming] subunit beta"/>
    <property type="match status" value="1"/>
</dbReference>
<dbReference type="FunFam" id="3.40.50.261:FF:000007">
    <property type="entry name" value="Succinate--CoA ligase [ADP-forming] subunit beta"/>
    <property type="match status" value="1"/>
</dbReference>
<dbReference type="Gene3D" id="3.30.1490.20">
    <property type="entry name" value="ATP-grasp fold, A domain"/>
    <property type="match status" value="1"/>
</dbReference>
<dbReference type="Gene3D" id="3.30.470.20">
    <property type="entry name" value="ATP-grasp fold, B domain"/>
    <property type="match status" value="1"/>
</dbReference>
<dbReference type="Gene3D" id="3.40.50.261">
    <property type="entry name" value="Succinyl-CoA synthetase domains"/>
    <property type="match status" value="1"/>
</dbReference>
<dbReference type="HAMAP" id="MF_00558">
    <property type="entry name" value="Succ_CoA_beta"/>
    <property type="match status" value="1"/>
</dbReference>
<dbReference type="InterPro" id="IPR011761">
    <property type="entry name" value="ATP-grasp"/>
</dbReference>
<dbReference type="InterPro" id="IPR013650">
    <property type="entry name" value="ATP-grasp_succ-CoA_synth-type"/>
</dbReference>
<dbReference type="InterPro" id="IPR013815">
    <property type="entry name" value="ATP_grasp_subdomain_1"/>
</dbReference>
<dbReference type="InterPro" id="IPR017866">
    <property type="entry name" value="Succ-CoA_synthase_bsu_CS"/>
</dbReference>
<dbReference type="InterPro" id="IPR005811">
    <property type="entry name" value="SUCC_ACL_C"/>
</dbReference>
<dbReference type="InterPro" id="IPR005809">
    <property type="entry name" value="Succ_CoA_ligase-like_bsu"/>
</dbReference>
<dbReference type="InterPro" id="IPR016102">
    <property type="entry name" value="Succinyl-CoA_synth-like"/>
</dbReference>
<dbReference type="NCBIfam" id="NF001913">
    <property type="entry name" value="PRK00696.1"/>
    <property type="match status" value="1"/>
</dbReference>
<dbReference type="NCBIfam" id="TIGR01016">
    <property type="entry name" value="sucCoAbeta"/>
    <property type="match status" value="1"/>
</dbReference>
<dbReference type="PANTHER" id="PTHR11815:SF10">
    <property type="entry name" value="SUCCINATE--COA LIGASE [GDP-FORMING] SUBUNIT BETA, MITOCHONDRIAL"/>
    <property type="match status" value="1"/>
</dbReference>
<dbReference type="PANTHER" id="PTHR11815">
    <property type="entry name" value="SUCCINYL-COA SYNTHETASE BETA CHAIN"/>
    <property type="match status" value="1"/>
</dbReference>
<dbReference type="Pfam" id="PF08442">
    <property type="entry name" value="ATP-grasp_2"/>
    <property type="match status" value="1"/>
</dbReference>
<dbReference type="Pfam" id="PF00549">
    <property type="entry name" value="Ligase_CoA"/>
    <property type="match status" value="1"/>
</dbReference>
<dbReference type="PIRSF" id="PIRSF001554">
    <property type="entry name" value="SucCS_beta"/>
    <property type="match status" value="1"/>
</dbReference>
<dbReference type="SUPFAM" id="SSF56059">
    <property type="entry name" value="Glutathione synthetase ATP-binding domain-like"/>
    <property type="match status" value="1"/>
</dbReference>
<dbReference type="SUPFAM" id="SSF52210">
    <property type="entry name" value="Succinyl-CoA synthetase domains"/>
    <property type="match status" value="1"/>
</dbReference>
<dbReference type="PROSITE" id="PS50975">
    <property type="entry name" value="ATP_GRASP"/>
    <property type="match status" value="1"/>
</dbReference>
<dbReference type="PROSITE" id="PS01217">
    <property type="entry name" value="SUCCINYL_COA_LIG_3"/>
    <property type="match status" value="1"/>
</dbReference>
<reference key="1">
    <citation type="journal article" date="2010" name="J. Bacteriol.">
        <title>Genome sequence of the Fleming strain of Micrococcus luteus, a simple free-living actinobacterium.</title>
        <authorList>
            <person name="Young M."/>
            <person name="Artsatbanov V."/>
            <person name="Beller H.R."/>
            <person name="Chandra G."/>
            <person name="Chater K.F."/>
            <person name="Dover L.G."/>
            <person name="Goh E.B."/>
            <person name="Kahan T."/>
            <person name="Kaprelyants A.S."/>
            <person name="Kyrpides N."/>
            <person name="Lapidus A."/>
            <person name="Lowry S.R."/>
            <person name="Lykidis A."/>
            <person name="Mahillon J."/>
            <person name="Markowitz V."/>
            <person name="Mavromatis K."/>
            <person name="Mukamolova G.V."/>
            <person name="Oren A."/>
            <person name="Rokem J.S."/>
            <person name="Smith M.C."/>
            <person name="Young D.I."/>
            <person name="Greenblatt C.L."/>
        </authorList>
    </citation>
    <scope>NUCLEOTIDE SEQUENCE [LARGE SCALE GENOMIC DNA]</scope>
    <source>
        <strain>ATCC 4698 / DSM 20030 / JCM 1464 / CCM 169 / CCUG 5858 / IAM 1056 / NBRC 3333 / NCIMB 9278 / NCTC 2665 / VKM Ac-2230</strain>
    </source>
</reference>
<organism>
    <name type="scientific">Micrococcus luteus (strain ATCC 4698 / DSM 20030 / JCM 1464 / CCM 169 / CCUG 5858 / IAM 1056 / NBRC 3333 / NCIMB 9278 / NCTC 2665 / VKM Ac-2230)</name>
    <name type="common">Micrococcus lysodeikticus</name>
    <dbReference type="NCBI Taxonomy" id="465515"/>
    <lineage>
        <taxon>Bacteria</taxon>
        <taxon>Bacillati</taxon>
        <taxon>Actinomycetota</taxon>
        <taxon>Actinomycetes</taxon>
        <taxon>Micrococcales</taxon>
        <taxon>Micrococcaceae</taxon>
        <taxon>Micrococcus</taxon>
    </lineage>
</organism>
<proteinExistence type="inferred from homology"/>
<evidence type="ECO:0000255" key="1">
    <source>
        <dbReference type="HAMAP-Rule" id="MF_00558"/>
    </source>
</evidence>
<sequence length="389" mass="40886">MDLYEYQARDLFEAHGVPVLAGIVAQTPDEAKAAAEKIGGVTVVKAQVKVGGRGKAGGVKVAKTADEAYEHAKAILGMDIKGHTVHQVMIAQGADIAEEYYFSVLLDRANRTYLAMCSVEGGMEIEQLAEERPEALAKVPVSALTGIDAETAQKIVAEAGFPEELRADVAEVIQKLWEVFEKEDATLVEVNPLVKTGDGKILALDGKVSLDDNAEFRQEGHAALVDERTEDPLEAKAKANDLNYVKLDGQVGVIGNGAGLVMSTLDVVAYAGEKHGGVKPANFLDIGGGANAEVMANGLDVILGDEQVKSVFVNVFGGITACDAVANGIVKALEILGDAATKPLVVRLDGNAVEEGRRILQEANHPLVTLAATMDEGADKAAELAHTAN</sequence>
<comment type="function">
    <text evidence="1">Succinyl-CoA synthetase functions in the citric acid cycle (TCA), coupling the hydrolysis of succinyl-CoA to the synthesis of either ATP or GTP and thus represents the only step of substrate-level phosphorylation in the TCA. The beta subunit provides nucleotide specificity of the enzyme and binds the substrate succinate, while the binding sites for coenzyme A and phosphate are found in the alpha subunit.</text>
</comment>
<comment type="catalytic activity">
    <reaction evidence="1">
        <text>succinate + ATP + CoA = succinyl-CoA + ADP + phosphate</text>
        <dbReference type="Rhea" id="RHEA:17661"/>
        <dbReference type="ChEBI" id="CHEBI:30031"/>
        <dbReference type="ChEBI" id="CHEBI:30616"/>
        <dbReference type="ChEBI" id="CHEBI:43474"/>
        <dbReference type="ChEBI" id="CHEBI:57287"/>
        <dbReference type="ChEBI" id="CHEBI:57292"/>
        <dbReference type="ChEBI" id="CHEBI:456216"/>
        <dbReference type="EC" id="6.2.1.5"/>
    </reaction>
    <physiologicalReaction direction="right-to-left" evidence="1">
        <dbReference type="Rhea" id="RHEA:17663"/>
    </physiologicalReaction>
</comment>
<comment type="catalytic activity">
    <reaction evidence="1">
        <text>GTP + succinate + CoA = succinyl-CoA + GDP + phosphate</text>
        <dbReference type="Rhea" id="RHEA:22120"/>
        <dbReference type="ChEBI" id="CHEBI:30031"/>
        <dbReference type="ChEBI" id="CHEBI:37565"/>
        <dbReference type="ChEBI" id="CHEBI:43474"/>
        <dbReference type="ChEBI" id="CHEBI:57287"/>
        <dbReference type="ChEBI" id="CHEBI:57292"/>
        <dbReference type="ChEBI" id="CHEBI:58189"/>
    </reaction>
    <physiologicalReaction direction="right-to-left" evidence="1">
        <dbReference type="Rhea" id="RHEA:22122"/>
    </physiologicalReaction>
</comment>
<comment type="cofactor">
    <cofactor evidence="1">
        <name>Mg(2+)</name>
        <dbReference type="ChEBI" id="CHEBI:18420"/>
    </cofactor>
    <text evidence="1">Binds 1 Mg(2+) ion per subunit.</text>
</comment>
<comment type="pathway">
    <text evidence="1">Carbohydrate metabolism; tricarboxylic acid cycle; succinate from succinyl-CoA (ligase route): step 1/1.</text>
</comment>
<comment type="subunit">
    <text evidence="1">Heterotetramer of two alpha and two beta subunits.</text>
</comment>
<comment type="similarity">
    <text evidence="1">Belongs to the succinate/malate CoA ligase beta subunit family.</text>
</comment>
<name>SUCC_MICLC</name>
<accession>C5C916</accession>
<feature type="chain" id="PRO_1000212027" description="Succinate--CoA ligase [ADP-forming] subunit beta">
    <location>
        <begin position="1"/>
        <end position="389"/>
    </location>
</feature>
<feature type="domain" description="ATP-grasp" evidence="1">
    <location>
        <begin position="9"/>
        <end position="236"/>
    </location>
</feature>
<feature type="binding site" evidence="1">
    <location>
        <position position="45"/>
    </location>
    <ligand>
        <name>ATP</name>
        <dbReference type="ChEBI" id="CHEBI:30616"/>
    </ligand>
</feature>
<feature type="binding site" evidence="1">
    <location>
        <begin position="52"/>
        <end position="54"/>
    </location>
    <ligand>
        <name>ATP</name>
        <dbReference type="ChEBI" id="CHEBI:30616"/>
    </ligand>
</feature>
<feature type="binding site" evidence="1">
    <location>
        <position position="94"/>
    </location>
    <ligand>
        <name>ATP</name>
        <dbReference type="ChEBI" id="CHEBI:30616"/>
    </ligand>
</feature>
<feature type="binding site" evidence="1">
    <location>
        <position position="99"/>
    </location>
    <ligand>
        <name>ATP</name>
        <dbReference type="ChEBI" id="CHEBI:30616"/>
    </ligand>
</feature>
<feature type="binding site" evidence="1">
    <location>
        <position position="191"/>
    </location>
    <ligand>
        <name>Mg(2+)</name>
        <dbReference type="ChEBI" id="CHEBI:18420"/>
    </ligand>
</feature>
<feature type="binding site" evidence="1">
    <location>
        <position position="205"/>
    </location>
    <ligand>
        <name>Mg(2+)</name>
        <dbReference type="ChEBI" id="CHEBI:18420"/>
    </ligand>
</feature>
<feature type="binding site" evidence="1">
    <location>
        <position position="256"/>
    </location>
    <ligand>
        <name>substrate</name>
        <note>ligand shared with subunit alpha</note>
    </ligand>
</feature>
<feature type="binding site" evidence="1">
    <location>
        <begin position="318"/>
        <end position="320"/>
    </location>
    <ligand>
        <name>substrate</name>
        <note>ligand shared with subunit alpha</note>
    </ligand>
</feature>
<keyword id="KW-0067">ATP-binding</keyword>
<keyword id="KW-0436">Ligase</keyword>
<keyword id="KW-0460">Magnesium</keyword>
<keyword id="KW-0479">Metal-binding</keyword>
<keyword id="KW-0547">Nucleotide-binding</keyword>
<keyword id="KW-1185">Reference proteome</keyword>
<keyword id="KW-0816">Tricarboxylic acid cycle</keyword>
<protein>
    <recommendedName>
        <fullName evidence="1">Succinate--CoA ligase [ADP-forming] subunit beta</fullName>
        <ecNumber evidence="1">6.2.1.5</ecNumber>
    </recommendedName>
    <alternativeName>
        <fullName evidence="1">Succinyl-CoA synthetase subunit beta</fullName>
        <shortName evidence="1">SCS-beta</shortName>
    </alternativeName>
</protein>
<gene>
    <name evidence="1" type="primary">sucC</name>
    <name type="ordered locus">Mlut_04270</name>
</gene>